<comment type="function">
    <text evidence="3">Beta-glucosidases are one of a number of cellulolytic enzymes involved in the degradation of cellulosic biomass. Catalyzes the last step releasing glucose from the inhibitory cellobiose.</text>
</comment>
<comment type="catalytic activity">
    <reaction>
        <text>Hydrolysis of terminal, non-reducing beta-D-glucosyl residues with release of beta-D-glucose.</text>
        <dbReference type="EC" id="3.2.1.21"/>
    </reaction>
</comment>
<comment type="biophysicochemical properties">
    <phDependence>
        <text evidence="3">Optimum pH is 6.0.</text>
    </phDependence>
    <temperatureDependence>
        <text evidence="3">Optimum temperature is 52 degrees Celsius.</text>
    </temperatureDependence>
</comment>
<comment type="pathway">
    <text>Glycan metabolism; cellulose degradation.</text>
</comment>
<comment type="subcellular location">
    <subcellularLocation>
        <location evidence="4">Secreted</location>
    </subcellularLocation>
</comment>
<comment type="similarity">
    <text evidence="4">Belongs to the glycosyl hydrolase 3 family.</text>
</comment>
<keyword id="KW-0119">Carbohydrate metabolism</keyword>
<keyword id="KW-0136">Cellulose degradation</keyword>
<keyword id="KW-0325">Glycoprotein</keyword>
<keyword id="KW-0326">Glycosidase</keyword>
<keyword id="KW-0378">Hydrolase</keyword>
<keyword id="KW-0624">Polysaccharide degradation</keyword>
<keyword id="KW-1185">Reference proteome</keyword>
<keyword id="KW-0964">Secreted</keyword>
<keyword id="KW-0732">Signal</keyword>
<proteinExistence type="evidence at protein level"/>
<protein>
    <recommendedName>
        <fullName>Beta-glucosidase C</fullName>
        <ecNumber>3.2.1.21</ecNumber>
    </recommendedName>
    <alternativeName>
        <fullName>Beta-D-glucoside glucohydrolase C</fullName>
    </alternativeName>
    <alternativeName>
        <fullName>Cellobiase C</fullName>
    </alternativeName>
    <alternativeName>
        <fullName>Gentiobiase C</fullName>
    </alternativeName>
</protein>
<sequence>MRVDSTVLALVALATDCLGLAIKSNEPELLRRDALPIYKNASYCVDERVRDLLSRMTLEEKAGQLFHKQLSEGPLDDDSSGNSTETMIGKKHMTHFNLASDITNATQTAEFINLIQKRALQTRLGIPITISTDPRHSFTENVGTGFQAGVFSQWPESLGLAALRDPQLVREFAEVAREEYLAVGIRAALHPQVDLSTEPRWARISGTWGENSTLTSELIVEYIKGFQGEGKLGPKSVKTVTKHFPGGGPMENGEDSHFYYGKNQTYPGNNIDEHLIPFKAALAAGATEIMPYYSRPIGTNWEAVGFSFNKEIVTDLLRGELGFDGIVLTDWGLITDTYIGNQYMPARAWGVEYLSELQRAARILDAGCDQFGGEERPELIVQLVREGTISEDRIDVSVARLLKEKFLLGLFDNPFVNASAANNIVGNEHFVNLGRDAQRRSYTLLTNNQTILPLAKPGEGTRFYIEGFDSAFMSARNYTVVNTTEEADFALLRYNAPYEPRNGTFEANFHAGSLAFNATEKARQAKIYSSLPTIVDIILDRPAVIPEVVEQAQAVLASYGSDSEAFLDVVFGVSKPEGKLPFDLPRSMDAVEAQAEDLPFDTENPVFRYGHGLEYEDN</sequence>
<organism>
    <name type="scientific">Emericella nidulans (strain FGSC A4 / ATCC 38163 / CBS 112.46 / NRRL 194 / M139)</name>
    <name type="common">Aspergillus nidulans</name>
    <dbReference type="NCBI Taxonomy" id="227321"/>
    <lineage>
        <taxon>Eukaryota</taxon>
        <taxon>Fungi</taxon>
        <taxon>Dikarya</taxon>
        <taxon>Ascomycota</taxon>
        <taxon>Pezizomycotina</taxon>
        <taxon>Eurotiomycetes</taxon>
        <taxon>Eurotiomycetidae</taxon>
        <taxon>Eurotiales</taxon>
        <taxon>Aspergillaceae</taxon>
        <taxon>Aspergillus</taxon>
        <taxon>Aspergillus subgen. Nidulantes</taxon>
    </lineage>
</organism>
<dbReference type="EC" id="3.2.1.21"/>
<dbReference type="EMBL" id="AACD01000029">
    <property type="protein sequence ID" value="EAA64969.1"/>
    <property type="molecule type" value="Genomic_DNA"/>
</dbReference>
<dbReference type="EMBL" id="BN001307">
    <property type="protein sequence ID" value="CBF85593.1"/>
    <property type="molecule type" value="Genomic_DNA"/>
</dbReference>
<dbReference type="RefSeq" id="XP_659408.1">
    <property type="nucleotide sequence ID" value="XM_654316.1"/>
</dbReference>
<dbReference type="SMR" id="Q5BCC6"/>
<dbReference type="STRING" id="227321.Q5BCC6"/>
<dbReference type="CAZy" id="GH3">
    <property type="family name" value="Glycoside Hydrolase Family 3"/>
</dbReference>
<dbReference type="GlyCosmos" id="Q5BCC6">
    <property type="glycosylation" value="11 sites, No reported glycans"/>
</dbReference>
<dbReference type="EnsemblFungi" id="CBF85593">
    <property type="protein sequence ID" value="CBF85593"/>
    <property type="gene ID" value="ANIA_01804"/>
</dbReference>
<dbReference type="KEGG" id="ani:ANIA_01804"/>
<dbReference type="VEuPathDB" id="FungiDB:AN1804"/>
<dbReference type="eggNOG" id="ENOG502QTBT">
    <property type="taxonomic scope" value="Eukaryota"/>
</dbReference>
<dbReference type="HOGENOM" id="CLU_004542_8_2_1"/>
<dbReference type="InParanoid" id="Q5BCC6"/>
<dbReference type="OMA" id="VKHWVGY"/>
<dbReference type="OrthoDB" id="416222at2759"/>
<dbReference type="UniPathway" id="UPA00696"/>
<dbReference type="Proteomes" id="UP000000560">
    <property type="component" value="Chromosome VII"/>
</dbReference>
<dbReference type="GO" id="GO:0005576">
    <property type="term" value="C:extracellular region"/>
    <property type="evidence" value="ECO:0007669"/>
    <property type="project" value="UniProtKB-SubCell"/>
</dbReference>
<dbReference type="GO" id="GO:0008422">
    <property type="term" value="F:beta-glucosidase activity"/>
    <property type="evidence" value="ECO:0000314"/>
    <property type="project" value="UniProtKB"/>
</dbReference>
<dbReference type="GO" id="GO:0030245">
    <property type="term" value="P:cellulose catabolic process"/>
    <property type="evidence" value="ECO:0007669"/>
    <property type="project" value="UniProtKB-UniPathway"/>
</dbReference>
<dbReference type="GO" id="GO:0009251">
    <property type="term" value="P:glucan catabolic process"/>
    <property type="evidence" value="ECO:0000314"/>
    <property type="project" value="UniProtKB"/>
</dbReference>
<dbReference type="FunFam" id="3.20.20.300:FF:000048">
    <property type="entry name" value="Beta-glucosidase C"/>
    <property type="match status" value="1"/>
</dbReference>
<dbReference type="FunFam" id="3.40.50.1700:FF:000031">
    <property type="entry name" value="Beta-glucosidase C"/>
    <property type="match status" value="1"/>
</dbReference>
<dbReference type="Gene3D" id="3.40.50.1700">
    <property type="entry name" value="Glycoside hydrolase family 3 C-terminal domain"/>
    <property type="match status" value="1"/>
</dbReference>
<dbReference type="Gene3D" id="3.20.20.300">
    <property type="entry name" value="Glycoside hydrolase, family 3, N-terminal domain"/>
    <property type="match status" value="1"/>
</dbReference>
<dbReference type="InterPro" id="IPR051915">
    <property type="entry name" value="Cellulose_Degrad_GH3"/>
</dbReference>
<dbReference type="InterPro" id="IPR002772">
    <property type="entry name" value="Glyco_hydro_3_C"/>
</dbReference>
<dbReference type="InterPro" id="IPR036881">
    <property type="entry name" value="Glyco_hydro_3_C_sf"/>
</dbReference>
<dbReference type="InterPro" id="IPR001764">
    <property type="entry name" value="Glyco_hydro_3_N"/>
</dbReference>
<dbReference type="InterPro" id="IPR036962">
    <property type="entry name" value="Glyco_hydro_3_N_sf"/>
</dbReference>
<dbReference type="InterPro" id="IPR017853">
    <property type="entry name" value="Glycoside_hydrolase_SF"/>
</dbReference>
<dbReference type="PANTHER" id="PTHR30620:SF16">
    <property type="entry name" value="LYSOSOMAL BETA GLUCOSIDASE"/>
    <property type="match status" value="1"/>
</dbReference>
<dbReference type="PANTHER" id="PTHR30620">
    <property type="entry name" value="PERIPLASMIC BETA-GLUCOSIDASE-RELATED"/>
    <property type="match status" value="1"/>
</dbReference>
<dbReference type="Pfam" id="PF00933">
    <property type="entry name" value="Glyco_hydro_3"/>
    <property type="match status" value="1"/>
</dbReference>
<dbReference type="Pfam" id="PF01915">
    <property type="entry name" value="Glyco_hydro_3_C"/>
    <property type="match status" value="1"/>
</dbReference>
<dbReference type="PRINTS" id="PR00133">
    <property type="entry name" value="GLHYDRLASE3"/>
</dbReference>
<dbReference type="SUPFAM" id="SSF51445">
    <property type="entry name" value="(Trans)glycosidases"/>
    <property type="match status" value="1"/>
</dbReference>
<dbReference type="SUPFAM" id="SSF52279">
    <property type="entry name" value="Beta-D-glucan exohydrolase, C-terminal domain"/>
    <property type="match status" value="1"/>
</dbReference>
<accession>Q5BCC6</accession>
<accession>C8VPG3</accession>
<gene>
    <name type="primary">bglC</name>
    <name type="ORF">AN1804</name>
</gene>
<feature type="signal peptide" evidence="2">
    <location>
        <begin position="1"/>
        <end position="19"/>
    </location>
</feature>
<feature type="chain" id="PRO_0000394105" description="Beta-glucosidase C">
    <location>
        <begin position="20"/>
        <end position="618"/>
    </location>
</feature>
<feature type="active site" evidence="1">
    <location>
        <position position="330"/>
    </location>
</feature>
<feature type="glycosylation site" description="N-linked (GlcNAc...) asparagine" evidence="2">
    <location>
        <position position="40"/>
    </location>
</feature>
<feature type="glycosylation site" description="N-linked (GlcNAc...) asparagine" evidence="2">
    <location>
        <position position="82"/>
    </location>
</feature>
<feature type="glycosylation site" description="N-linked (GlcNAc...) asparagine" evidence="2">
    <location>
        <position position="104"/>
    </location>
</feature>
<feature type="glycosylation site" description="N-linked (GlcNAc...) asparagine" evidence="2">
    <location>
        <position position="211"/>
    </location>
</feature>
<feature type="glycosylation site" description="N-linked (GlcNAc...) asparagine" evidence="2">
    <location>
        <position position="263"/>
    </location>
</feature>
<feature type="glycosylation site" description="N-linked (GlcNAc...) asparagine" evidence="2">
    <location>
        <position position="417"/>
    </location>
</feature>
<feature type="glycosylation site" description="N-linked (GlcNAc...) asparagine" evidence="2">
    <location>
        <position position="448"/>
    </location>
</feature>
<feature type="glycosylation site" description="N-linked (GlcNAc...) asparagine" evidence="2">
    <location>
        <position position="477"/>
    </location>
</feature>
<feature type="glycosylation site" description="N-linked (GlcNAc...) asparagine" evidence="2">
    <location>
        <position position="482"/>
    </location>
</feature>
<feature type="glycosylation site" description="N-linked (GlcNAc...) asparagine" evidence="2">
    <location>
        <position position="502"/>
    </location>
</feature>
<feature type="glycosylation site" description="N-linked (GlcNAc...) asparagine" evidence="2">
    <location>
        <position position="517"/>
    </location>
</feature>
<name>BGLC_EMENI</name>
<reference key="1">
    <citation type="journal article" date="2005" name="Nature">
        <title>Sequencing of Aspergillus nidulans and comparative analysis with A. fumigatus and A. oryzae.</title>
        <authorList>
            <person name="Galagan J.E."/>
            <person name="Calvo S.E."/>
            <person name="Cuomo C."/>
            <person name="Ma L.-J."/>
            <person name="Wortman J.R."/>
            <person name="Batzoglou S."/>
            <person name="Lee S.-I."/>
            <person name="Bastuerkmen M."/>
            <person name="Spevak C.C."/>
            <person name="Clutterbuck J."/>
            <person name="Kapitonov V."/>
            <person name="Jurka J."/>
            <person name="Scazzocchio C."/>
            <person name="Farman M.L."/>
            <person name="Butler J."/>
            <person name="Purcell S."/>
            <person name="Harris S."/>
            <person name="Braus G.H."/>
            <person name="Draht O."/>
            <person name="Busch S."/>
            <person name="D'Enfert C."/>
            <person name="Bouchier C."/>
            <person name="Goldman G.H."/>
            <person name="Bell-Pedersen D."/>
            <person name="Griffiths-Jones S."/>
            <person name="Doonan J.H."/>
            <person name="Yu J."/>
            <person name="Vienken K."/>
            <person name="Pain A."/>
            <person name="Freitag M."/>
            <person name="Selker E.U."/>
            <person name="Archer D.B."/>
            <person name="Penalva M.A."/>
            <person name="Oakley B.R."/>
            <person name="Momany M."/>
            <person name="Tanaka T."/>
            <person name="Kumagai T."/>
            <person name="Asai K."/>
            <person name="Machida M."/>
            <person name="Nierman W.C."/>
            <person name="Denning D.W."/>
            <person name="Caddick M.X."/>
            <person name="Hynes M."/>
            <person name="Paoletti M."/>
            <person name="Fischer R."/>
            <person name="Miller B.L."/>
            <person name="Dyer P.S."/>
            <person name="Sachs M.S."/>
            <person name="Osmani S.A."/>
            <person name="Birren B.W."/>
        </authorList>
    </citation>
    <scope>NUCLEOTIDE SEQUENCE [LARGE SCALE GENOMIC DNA]</scope>
    <source>
        <strain>FGSC A4 / ATCC 38163 / CBS 112.46 / NRRL 194 / M139</strain>
    </source>
</reference>
<reference key="2">
    <citation type="journal article" date="2009" name="Fungal Genet. Biol.">
        <title>The 2008 update of the Aspergillus nidulans genome annotation: a community effort.</title>
        <authorList>
            <person name="Wortman J.R."/>
            <person name="Gilsenan J.M."/>
            <person name="Joardar V."/>
            <person name="Deegan J."/>
            <person name="Clutterbuck J."/>
            <person name="Andersen M.R."/>
            <person name="Archer D."/>
            <person name="Bencina M."/>
            <person name="Braus G."/>
            <person name="Coutinho P."/>
            <person name="von Dohren H."/>
            <person name="Doonan J."/>
            <person name="Driessen A.J."/>
            <person name="Durek P."/>
            <person name="Espeso E."/>
            <person name="Fekete E."/>
            <person name="Flipphi M."/>
            <person name="Estrada C.G."/>
            <person name="Geysens S."/>
            <person name="Goldman G."/>
            <person name="de Groot P.W."/>
            <person name="Hansen K."/>
            <person name="Harris S.D."/>
            <person name="Heinekamp T."/>
            <person name="Helmstaedt K."/>
            <person name="Henrissat B."/>
            <person name="Hofmann G."/>
            <person name="Homan T."/>
            <person name="Horio T."/>
            <person name="Horiuchi H."/>
            <person name="James S."/>
            <person name="Jones M."/>
            <person name="Karaffa L."/>
            <person name="Karanyi Z."/>
            <person name="Kato M."/>
            <person name="Keller N."/>
            <person name="Kelly D.E."/>
            <person name="Kiel J.A."/>
            <person name="Kim J.M."/>
            <person name="van der Klei I.J."/>
            <person name="Klis F.M."/>
            <person name="Kovalchuk A."/>
            <person name="Krasevec N."/>
            <person name="Kubicek C.P."/>
            <person name="Liu B."/>
            <person name="Maccabe A."/>
            <person name="Meyer V."/>
            <person name="Mirabito P."/>
            <person name="Miskei M."/>
            <person name="Mos M."/>
            <person name="Mullins J."/>
            <person name="Nelson D.R."/>
            <person name="Nielsen J."/>
            <person name="Oakley B.R."/>
            <person name="Osmani S.A."/>
            <person name="Pakula T."/>
            <person name="Paszewski A."/>
            <person name="Paulsen I."/>
            <person name="Pilsyk S."/>
            <person name="Pocsi I."/>
            <person name="Punt P.J."/>
            <person name="Ram A.F."/>
            <person name="Ren Q."/>
            <person name="Robellet X."/>
            <person name="Robson G."/>
            <person name="Seiboth B."/>
            <person name="van Solingen P."/>
            <person name="Specht T."/>
            <person name="Sun J."/>
            <person name="Taheri-Talesh N."/>
            <person name="Takeshita N."/>
            <person name="Ussery D."/>
            <person name="vanKuyk P.A."/>
            <person name="Visser H."/>
            <person name="van de Vondervoort P.J."/>
            <person name="de Vries R.P."/>
            <person name="Walton J."/>
            <person name="Xiang X."/>
            <person name="Xiong Y."/>
            <person name="Zeng A.P."/>
            <person name="Brandt B.W."/>
            <person name="Cornell M.J."/>
            <person name="van den Hondel C.A."/>
            <person name="Visser J."/>
            <person name="Oliver S.G."/>
            <person name="Turner G."/>
        </authorList>
    </citation>
    <scope>GENOME REANNOTATION</scope>
    <source>
        <strain>FGSC A4 / ATCC 38163 / CBS 112.46 / NRRL 194 / M139</strain>
    </source>
</reference>
<reference key="3">
    <citation type="journal article" date="2006" name="Proc. Natl. Acad. Sci. U.S.A.">
        <title>Development and application of a suite of polysaccharide-degrading enzymes for analyzing plant cell walls.</title>
        <authorList>
            <person name="Bauer S."/>
            <person name="Vasu P."/>
            <person name="Persson S."/>
            <person name="Mort A.J."/>
            <person name="Somerville C.R."/>
        </authorList>
    </citation>
    <scope>FUNCTION</scope>
    <scope>BIOPHYSICOCHEMICAL PROPERTIES</scope>
    <source>
        <strain>FGSC A4 / ATCC 38163 / CBS 112.46 / NRRL 194 / M139</strain>
    </source>
</reference>
<evidence type="ECO:0000250" key="1"/>
<evidence type="ECO:0000255" key="2"/>
<evidence type="ECO:0000269" key="3">
    <source>
    </source>
</evidence>
<evidence type="ECO:0000305" key="4"/>